<comment type="function">
    <text evidence="2">Serine proteinase. Releases tripeptides from the free amino terminus of proteins. Has a requirement for Pro in the P1 position, but is inactivated by Pro in the P1' position (By similarity).</text>
</comment>
<comment type="catalytic activity">
    <reaction evidence="2">
        <text>Hydrolysis of Xaa-Xaa-Pro-|-Yaa- releasing the N-terminal tripeptide of a peptide with Pro as the third residue (position P1) and where Yaa is not proline.</text>
        <dbReference type="EC" id="3.4.14.12"/>
    </reaction>
</comment>
<comment type="similarity">
    <text evidence="3">Belongs to the peptidase S9B family.</text>
</comment>
<name>PTP_PORG3</name>
<proteinExistence type="inferred from homology"/>
<accession>B2RJX3</accession>
<reference key="1">
    <citation type="journal article" date="2008" name="DNA Res.">
        <title>Determination of the genome sequence of Porphyromonas gingivalis strain ATCC 33277 and genomic comparison with strain W83 revealed extensive genome rearrangements in P. gingivalis.</title>
        <authorList>
            <person name="Naito M."/>
            <person name="Hirakawa H."/>
            <person name="Yamashita A."/>
            <person name="Ohara N."/>
            <person name="Shoji M."/>
            <person name="Yukitake H."/>
            <person name="Nakayama K."/>
            <person name="Toh H."/>
            <person name="Yoshimura F."/>
            <person name="Kuhara S."/>
            <person name="Hattori M."/>
            <person name="Hayashi T."/>
            <person name="Nakayama K."/>
        </authorList>
    </citation>
    <scope>NUCLEOTIDE SEQUENCE [LARGE SCALE GENOMIC DNA]</scope>
    <source>
        <strain>ATCC 33277 / DSM 20709 / CIP 103683 / JCM 12257 / NCTC 11834 / 2561</strain>
    </source>
</reference>
<sequence length="732" mass="82376">MKKTIFQQLFLSVCALTVALPCSAQSPETSGKEFTLEQLMPGGKEFYNFYPEYVVGLQWMGDNYVFIEGDDLVFNKANGKSAQTTRFSAADLNALMPEGCKFQTTDAFPSFRTLDAGRGQVVLFTQRGLVGFDMLARKVTYLFDTNEETASLDFSPVGDRVAYVRNHNLYIARGGKLGEGMSRAIAVTIDGAETLVYGQAVHQREFGIEKGTFWSPKGSCLAFYRMDQSMVKPTPIVDYHPLEAESKPLYYPMAGTPSHHVTVGIYHLATGKTVYLQTGEPKEKFLTNLSWSPDENILYVAEVNRAQNECKVNAYDAETGRFVRTLFVETDKHYVEPLHPLTFLPGSNNQFIWQSRRDGWNHLYLYDTTGRLIRQVTKGEWEVTNFAGFDPKGTRLYFESTEASPLERHFYCIDIKGGKTKDLTPESGMHRTQLSPDGSAIIDIFQSPTVPRKVTVTNIGKGSYTLLEAKNPDTGYAMPEIRTGTIMAADGQTPLYYKLTMPLHFDPAKKYPVIVYVYGGPHAQLVTKTWRSSVGGWDIYMAQKGYAVFTVDSRGSANRGAAFEQVIHRRLGQTEMADQMCGVDFLKSQSWVDADRIGVHGWSYGGFMTTNLMLTHGDVFKVGVAGGPVIDWNRYEIMYGERYFDAPQENPEGYDAANLLKRAGDLKGRLMLIHGAIDPVVVWQHSLLFLDACVKARTYPDYYVYPSHEHNVMGPDRVHLYETITRYFTDHL</sequence>
<gene>
    <name evidence="2" type="primary">ptpA</name>
    <name type="ordered locus">PGN_1149</name>
</gene>
<evidence type="ECO:0000250" key="1">
    <source>
        <dbReference type="UniProtKB" id="Q12884"/>
    </source>
</evidence>
<evidence type="ECO:0000250" key="2">
    <source>
        <dbReference type="UniProtKB" id="Q7MUW6"/>
    </source>
</evidence>
<evidence type="ECO:0000255" key="3"/>
<organism>
    <name type="scientific">Porphyromonas gingivalis (strain ATCC 33277 / DSM 20709 / CIP 103683 / JCM 12257 / NCTC 11834 / 2561)</name>
    <dbReference type="NCBI Taxonomy" id="431947"/>
    <lineage>
        <taxon>Bacteria</taxon>
        <taxon>Pseudomonadati</taxon>
        <taxon>Bacteroidota</taxon>
        <taxon>Bacteroidia</taxon>
        <taxon>Bacteroidales</taxon>
        <taxon>Porphyromonadaceae</taxon>
        <taxon>Porphyromonas</taxon>
    </lineage>
</organism>
<feature type="signal peptide" evidence="3">
    <location>
        <begin position="1"/>
        <end position="24"/>
    </location>
</feature>
<feature type="chain" id="PRO_0000394759" description="Prolyl tripeptidyl peptidase" evidence="3">
    <location>
        <begin position="25"/>
        <end position="732"/>
    </location>
</feature>
<feature type="active site" description="Charge relay system" evidence="1">
    <location>
        <position position="603"/>
    </location>
</feature>
<feature type="active site" description="Charge relay system" evidence="1">
    <location>
        <position position="678"/>
    </location>
</feature>
<feature type="active site" description="Charge relay system" evidence="1">
    <location>
        <position position="710"/>
    </location>
</feature>
<keyword id="KW-0031">Aminopeptidase</keyword>
<keyword id="KW-0378">Hydrolase</keyword>
<keyword id="KW-0645">Protease</keyword>
<keyword id="KW-0720">Serine protease</keyword>
<keyword id="KW-0732">Signal</keyword>
<protein>
    <recommendedName>
        <fullName evidence="2">Prolyl tripeptidyl peptidase</fullName>
        <shortName evidence="2">PTP</shortName>
        <ecNumber>3.4.14.12</ecNumber>
    </recommendedName>
    <alternativeName>
        <fullName evidence="2">Prolyl tripeptidyl peptidase A</fullName>
    </alternativeName>
</protein>
<dbReference type="EC" id="3.4.14.12"/>
<dbReference type="EMBL" id="AP009380">
    <property type="protein sequence ID" value="BAG33668.1"/>
    <property type="molecule type" value="Genomic_DNA"/>
</dbReference>
<dbReference type="RefSeq" id="WP_012458062.1">
    <property type="nucleotide sequence ID" value="NC_010729.1"/>
</dbReference>
<dbReference type="SMR" id="B2RJX3"/>
<dbReference type="ESTHER" id="porgi-q7muw6">
    <property type="family name" value="DPP4N_Peptidase_S9"/>
</dbReference>
<dbReference type="MEROPS" id="S09.017"/>
<dbReference type="GeneID" id="29256355"/>
<dbReference type="KEGG" id="pgn:PGN_1149"/>
<dbReference type="eggNOG" id="COG0823">
    <property type="taxonomic scope" value="Bacteria"/>
</dbReference>
<dbReference type="eggNOG" id="COG1506">
    <property type="taxonomic scope" value="Bacteria"/>
</dbReference>
<dbReference type="HOGENOM" id="CLU_006105_2_0_10"/>
<dbReference type="OrthoDB" id="9812921at2"/>
<dbReference type="BioCyc" id="PGIN431947:G1G2V-1314-MONOMER"/>
<dbReference type="Proteomes" id="UP000008842">
    <property type="component" value="Chromosome"/>
</dbReference>
<dbReference type="GO" id="GO:0004177">
    <property type="term" value="F:aminopeptidase activity"/>
    <property type="evidence" value="ECO:0007669"/>
    <property type="project" value="UniProtKB-KW"/>
</dbReference>
<dbReference type="GO" id="GO:0008239">
    <property type="term" value="F:dipeptidyl-peptidase activity"/>
    <property type="evidence" value="ECO:0007669"/>
    <property type="project" value="TreeGrafter"/>
</dbReference>
<dbReference type="GO" id="GO:0008236">
    <property type="term" value="F:serine-type peptidase activity"/>
    <property type="evidence" value="ECO:0007669"/>
    <property type="project" value="UniProtKB-KW"/>
</dbReference>
<dbReference type="GO" id="GO:0006508">
    <property type="term" value="P:proteolysis"/>
    <property type="evidence" value="ECO:0007669"/>
    <property type="project" value="UniProtKB-KW"/>
</dbReference>
<dbReference type="Gene3D" id="3.40.50.1820">
    <property type="entry name" value="alpha/beta hydrolase"/>
    <property type="match status" value="1"/>
</dbReference>
<dbReference type="Gene3D" id="2.140.10.30">
    <property type="entry name" value="Dipeptidylpeptidase IV, N-terminal domain"/>
    <property type="match status" value="1"/>
</dbReference>
<dbReference type="InterPro" id="IPR029058">
    <property type="entry name" value="AB_hydrolase_fold"/>
</dbReference>
<dbReference type="InterPro" id="IPR001375">
    <property type="entry name" value="Peptidase_S9_cat"/>
</dbReference>
<dbReference type="InterPro" id="IPR002469">
    <property type="entry name" value="Peptidase_S9B_N"/>
</dbReference>
<dbReference type="InterPro" id="IPR050278">
    <property type="entry name" value="Serine_Prot_S9B/DPPIV"/>
</dbReference>
<dbReference type="PANTHER" id="PTHR11731:SF193">
    <property type="entry name" value="DIPEPTIDYL PEPTIDASE 9"/>
    <property type="match status" value="1"/>
</dbReference>
<dbReference type="PANTHER" id="PTHR11731">
    <property type="entry name" value="PROTEASE FAMILY S9B,C DIPEPTIDYL-PEPTIDASE IV-RELATED"/>
    <property type="match status" value="1"/>
</dbReference>
<dbReference type="Pfam" id="PF00930">
    <property type="entry name" value="DPPIV_N"/>
    <property type="match status" value="1"/>
</dbReference>
<dbReference type="Pfam" id="PF00326">
    <property type="entry name" value="Peptidase_S9"/>
    <property type="match status" value="1"/>
</dbReference>
<dbReference type="SUPFAM" id="SSF53474">
    <property type="entry name" value="alpha/beta-Hydrolases"/>
    <property type="match status" value="1"/>
</dbReference>
<dbReference type="SUPFAM" id="SSF82171">
    <property type="entry name" value="DPP6 N-terminal domain-like"/>
    <property type="match status" value="1"/>
</dbReference>